<proteinExistence type="inferred from homology"/>
<reference key="1">
    <citation type="journal article" date="2009" name="PLoS Genet.">
        <title>Organised genome dynamics in the Escherichia coli species results in highly diverse adaptive paths.</title>
        <authorList>
            <person name="Touchon M."/>
            <person name="Hoede C."/>
            <person name="Tenaillon O."/>
            <person name="Barbe V."/>
            <person name="Baeriswyl S."/>
            <person name="Bidet P."/>
            <person name="Bingen E."/>
            <person name="Bonacorsi S."/>
            <person name="Bouchier C."/>
            <person name="Bouvet O."/>
            <person name="Calteau A."/>
            <person name="Chiapello H."/>
            <person name="Clermont O."/>
            <person name="Cruveiller S."/>
            <person name="Danchin A."/>
            <person name="Diard M."/>
            <person name="Dossat C."/>
            <person name="Karoui M.E."/>
            <person name="Frapy E."/>
            <person name="Garry L."/>
            <person name="Ghigo J.M."/>
            <person name="Gilles A.M."/>
            <person name="Johnson J."/>
            <person name="Le Bouguenec C."/>
            <person name="Lescat M."/>
            <person name="Mangenot S."/>
            <person name="Martinez-Jehanne V."/>
            <person name="Matic I."/>
            <person name="Nassif X."/>
            <person name="Oztas S."/>
            <person name="Petit M.A."/>
            <person name="Pichon C."/>
            <person name="Rouy Z."/>
            <person name="Ruf C.S."/>
            <person name="Schneider D."/>
            <person name="Tourret J."/>
            <person name="Vacherie B."/>
            <person name="Vallenet D."/>
            <person name="Medigue C."/>
            <person name="Rocha E.P.C."/>
            <person name="Denamur E."/>
        </authorList>
    </citation>
    <scope>NUCLEOTIDE SEQUENCE [LARGE SCALE GENOMIC DNA]</scope>
    <source>
        <strain>S88 / ExPEC</strain>
    </source>
</reference>
<feature type="chain" id="PRO_1000193256" description="Ribosome-binding factor A">
    <location>
        <begin position="1"/>
        <end position="133"/>
    </location>
</feature>
<protein>
    <recommendedName>
        <fullName evidence="1">Ribosome-binding factor A</fullName>
    </recommendedName>
</protein>
<gene>
    <name evidence="1" type="primary">rbfA</name>
    <name type="ordered locus">ECS88_3551</name>
</gene>
<accession>B7MB88</accession>
<name>RBFA_ECO45</name>
<comment type="function">
    <text evidence="1">One of several proteins that assist in the late maturation steps of the functional core of the 30S ribosomal subunit. Associates with free 30S ribosomal subunits (but not with 30S subunits that are part of 70S ribosomes or polysomes). Required for efficient processing of 16S rRNA. May interact with the 5'-terminal helix region of 16S rRNA.</text>
</comment>
<comment type="subunit">
    <text evidence="1">Monomer. Binds 30S ribosomal subunits, but not 50S ribosomal subunits or 70S ribosomes.</text>
</comment>
<comment type="subcellular location">
    <subcellularLocation>
        <location evidence="1">Cytoplasm</location>
    </subcellularLocation>
</comment>
<comment type="similarity">
    <text evidence="1">Belongs to the RbfA family.</text>
</comment>
<keyword id="KW-0963">Cytoplasm</keyword>
<keyword id="KW-1185">Reference proteome</keyword>
<keyword id="KW-0690">Ribosome biogenesis</keyword>
<evidence type="ECO:0000255" key="1">
    <source>
        <dbReference type="HAMAP-Rule" id="MF_00003"/>
    </source>
</evidence>
<dbReference type="EMBL" id="CU928161">
    <property type="protein sequence ID" value="CAR04779.1"/>
    <property type="molecule type" value="Genomic_DNA"/>
</dbReference>
<dbReference type="RefSeq" id="WP_001040205.1">
    <property type="nucleotide sequence ID" value="NC_011742.1"/>
</dbReference>
<dbReference type="SMR" id="B7MB88"/>
<dbReference type="GeneID" id="93778816"/>
<dbReference type="KEGG" id="ecz:ECS88_3551"/>
<dbReference type="HOGENOM" id="CLU_089475_5_0_6"/>
<dbReference type="Proteomes" id="UP000000747">
    <property type="component" value="Chromosome"/>
</dbReference>
<dbReference type="GO" id="GO:0005829">
    <property type="term" value="C:cytosol"/>
    <property type="evidence" value="ECO:0007669"/>
    <property type="project" value="TreeGrafter"/>
</dbReference>
<dbReference type="GO" id="GO:0043024">
    <property type="term" value="F:ribosomal small subunit binding"/>
    <property type="evidence" value="ECO:0007669"/>
    <property type="project" value="TreeGrafter"/>
</dbReference>
<dbReference type="GO" id="GO:0030490">
    <property type="term" value="P:maturation of SSU-rRNA"/>
    <property type="evidence" value="ECO:0007669"/>
    <property type="project" value="UniProtKB-UniRule"/>
</dbReference>
<dbReference type="FunFam" id="3.30.300.20:FF:000007">
    <property type="entry name" value="Ribosome-binding factor A"/>
    <property type="match status" value="1"/>
</dbReference>
<dbReference type="Gene3D" id="3.30.300.20">
    <property type="match status" value="1"/>
</dbReference>
<dbReference type="HAMAP" id="MF_00003">
    <property type="entry name" value="RbfA"/>
    <property type="match status" value="1"/>
</dbReference>
<dbReference type="InterPro" id="IPR015946">
    <property type="entry name" value="KH_dom-like_a/b"/>
</dbReference>
<dbReference type="InterPro" id="IPR000238">
    <property type="entry name" value="RbfA"/>
</dbReference>
<dbReference type="InterPro" id="IPR023799">
    <property type="entry name" value="RbfA_dom_sf"/>
</dbReference>
<dbReference type="InterPro" id="IPR020053">
    <property type="entry name" value="Ribosome-bd_factorA_CS"/>
</dbReference>
<dbReference type="NCBIfam" id="TIGR00082">
    <property type="entry name" value="rbfA"/>
    <property type="match status" value="1"/>
</dbReference>
<dbReference type="PANTHER" id="PTHR33515">
    <property type="entry name" value="RIBOSOME-BINDING FACTOR A, CHLOROPLASTIC-RELATED"/>
    <property type="match status" value="1"/>
</dbReference>
<dbReference type="PANTHER" id="PTHR33515:SF1">
    <property type="entry name" value="RIBOSOME-BINDING FACTOR A, CHLOROPLASTIC-RELATED"/>
    <property type="match status" value="1"/>
</dbReference>
<dbReference type="Pfam" id="PF02033">
    <property type="entry name" value="RBFA"/>
    <property type="match status" value="1"/>
</dbReference>
<dbReference type="SUPFAM" id="SSF89919">
    <property type="entry name" value="Ribosome-binding factor A, RbfA"/>
    <property type="match status" value="1"/>
</dbReference>
<dbReference type="PROSITE" id="PS01319">
    <property type="entry name" value="RBFA"/>
    <property type="match status" value="1"/>
</dbReference>
<organism>
    <name type="scientific">Escherichia coli O45:K1 (strain S88 / ExPEC)</name>
    <dbReference type="NCBI Taxonomy" id="585035"/>
    <lineage>
        <taxon>Bacteria</taxon>
        <taxon>Pseudomonadati</taxon>
        <taxon>Pseudomonadota</taxon>
        <taxon>Gammaproteobacteria</taxon>
        <taxon>Enterobacterales</taxon>
        <taxon>Enterobacteriaceae</taxon>
        <taxon>Escherichia</taxon>
    </lineage>
</organism>
<sequence>MAKEFGRPQRVAQEMQKEIALILQREIKDPRLGMMTTVSGVEMSRDLAYAKVYVTFLNDKDEDAVKAGIKALQEASGFIRSLLGKAMRLRIVPELTFFYDNSLVEGMRMSNLVTSVVKHDEERRVNPDDSKED</sequence>